<dbReference type="EMBL" id="GU292871">
    <property type="protein sequence ID" value="ADB56687.1"/>
    <property type="molecule type" value="mRNA"/>
</dbReference>
<dbReference type="SMR" id="D2Y1Z4"/>
<dbReference type="ArachnoServer" id="AS000339">
    <property type="toxin name" value="mu-theraphotoxin-Hhn2a"/>
</dbReference>
<dbReference type="GO" id="GO:0005576">
    <property type="term" value="C:extracellular region"/>
    <property type="evidence" value="ECO:0007669"/>
    <property type="project" value="UniProtKB-SubCell"/>
</dbReference>
<dbReference type="GO" id="GO:0044231">
    <property type="term" value="C:host cell presynaptic membrane"/>
    <property type="evidence" value="ECO:0007669"/>
    <property type="project" value="UniProtKB-KW"/>
</dbReference>
<dbReference type="GO" id="GO:0008200">
    <property type="term" value="F:ion channel inhibitor activity"/>
    <property type="evidence" value="ECO:0007669"/>
    <property type="project" value="InterPro"/>
</dbReference>
<dbReference type="GO" id="GO:0017080">
    <property type="term" value="F:sodium channel regulator activity"/>
    <property type="evidence" value="ECO:0007669"/>
    <property type="project" value="UniProtKB-KW"/>
</dbReference>
<dbReference type="GO" id="GO:0090729">
    <property type="term" value="F:toxin activity"/>
    <property type="evidence" value="ECO:0007669"/>
    <property type="project" value="UniProtKB-KW"/>
</dbReference>
<dbReference type="InterPro" id="IPR011696">
    <property type="entry name" value="Huwentoxin-1"/>
</dbReference>
<dbReference type="InterPro" id="IPR013140">
    <property type="entry name" value="Huwentoxin_CS1"/>
</dbReference>
<dbReference type="Pfam" id="PF07740">
    <property type="entry name" value="Toxin_12"/>
    <property type="match status" value="1"/>
</dbReference>
<dbReference type="SUPFAM" id="SSF57059">
    <property type="entry name" value="omega toxin-like"/>
    <property type="match status" value="1"/>
</dbReference>
<dbReference type="PROSITE" id="PS60021">
    <property type="entry name" value="HWTX_1"/>
    <property type="match status" value="1"/>
</dbReference>
<evidence type="ECO:0000255" key="1"/>
<evidence type="ECO:0000269" key="2">
    <source>
    </source>
</evidence>
<evidence type="ECO:0000269" key="3">
    <source>
    </source>
</evidence>
<evidence type="ECO:0000269" key="4">
    <source>
    </source>
</evidence>
<evidence type="ECO:0000269" key="5">
    <source ref="3"/>
</evidence>
<evidence type="ECO:0000269" key="6">
    <source ref="5"/>
</evidence>
<evidence type="ECO:0000303" key="7">
    <source>
    </source>
</evidence>
<evidence type="ECO:0000303" key="8">
    <source ref="5"/>
</evidence>
<evidence type="ECO:0000305" key="9"/>
<evidence type="ECO:0000305" key="10">
    <source>
    </source>
</evidence>
<evidence type="ECO:0000305" key="11">
    <source>
    </source>
</evidence>
<keyword id="KW-0027">Amidation</keyword>
<keyword id="KW-0903">Direct protein sequencing</keyword>
<keyword id="KW-1015">Disulfide bond</keyword>
<keyword id="KW-0872">Ion channel impairing toxin</keyword>
<keyword id="KW-0960">Knottin</keyword>
<keyword id="KW-0528">Neurotoxin</keyword>
<keyword id="KW-0638">Presynaptic neurotoxin</keyword>
<keyword id="KW-0964">Secreted</keyword>
<keyword id="KW-0732">Signal</keyword>
<keyword id="KW-0800">Toxin</keyword>
<keyword id="KW-0738">Voltage-gated sodium channel impairing toxin</keyword>
<comment type="function">
    <text evidence="4">Selective antagonist of neuronal tetrodotoxin (TTX)-sensitive voltage-gated sodium channels (IC(50)=1270 nM on Nav1.1/SCN1A, 270 nM on Nav1.2/SCN2A, 491 nM on Nav1.3/SCN3A and 232 nM on Nav1.7/SCN9A). This toxin suppress Nav1.7 current amplitude without significantly altering the activation, inactivation, and repriming kinetics. Short extreme depolarizations partially activate the toxin-bound channel, indicating voltage-dependent inhibition of this toxin. This toxin increases the deactivation of the Nav1.7 current after extreme depolarizations. The toxin-Nav1.7 complex is gradually dissociated upon prolonged strong depolarizations in a voltage-dependent manner, and the unbound toxin rebinds to Nav1.7 after a long repolarization. Moreover, analysis of chimeric channels showed that the DIIS3-S4 linker is critical for toxin binding to Nav1.7. These data are consistent with this toxin interacting with Nav1.7 site 4 and trapping the domain II voltage sensor in the closed state.</text>
</comment>
<comment type="subunit">
    <text evidence="5">Monomer.</text>
</comment>
<comment type="subcellular location">
    <subcellularLocation>
        <location evidence="2 4">Secreted</location>
    </subcellularLocation>
</comment>
<comment type="tissue specificity">
    <text evidence="10 11">Expressed by the venom gland.</text>
</comment>
<comment type="domain">
    <text evidence="4">The presence of a 'disulfide through disulfide knot' structurally defines this protein as a knottin.</text>
</comment>
<comment type="mass spectrometry" mass="3607.6" method="Electrospray" evidence="5"/>
<comment type="miscellaneous">
    <text evidence="2 4">Negative results: has no activity on Nav1.4, Nav1.5, Nav1.8 and Nav1.9 sodium and calcium currents.</text>
</comment>
<comment type="similarity">
    <text evidence="9">Belongs to the neurotoxin 10 (Hwtx-1) family. 15 (Hntx-3) subfamily.</text>
</comment>
<comment type="caution">
    <text evidence="9">Several genes are coding for this toxin for which the structure by NMR has been determined. The cross-references to PDB and additional information can be found in entry AC D2Y1X9.</text>
</comment>
<feature type="signal peptide" evidence="1">
    <location>
        <begin position="1"/>
        <end position="21"/>
    </location>
</feature>
<feature type="propeptide" id="PRO_0000400514" evidence="2 3">
    <location>
        <begin position="22"/>
        <end position="48"/>
    </location>
</feature>
<feature type="peptide" id="PRO_0000400515" description="Hainantoxin-III 6" evidence="2 3">
    <location>
        <begin position="49"/>
        <end position="81"/>
    </location>
</feature>
<feature type="modified residue" description="Leucine amide" evidence="2">
    <location>
        <position position="81"/>
    </location>
</feature>
<feature type="disulfide bond" evidence="4 6">
    <location>
        <begin position="50"/>
        <end position="65"/>
    </location>
</feature>
<feature type="disulfide bond" evidence="4 6">
    <location>
        <begin position="57"/>
        <end position="70"/>
    </location>
</feature>
<feature type="disulfide bond" evidence="4 6">
    <location>
        <begin position="64"/>
        <end position="77"/>
    </location>
</feature>
<accession>D2Y1Z4</accession>
<accession>P83464</accession>
<protein>
    <recommendedName>
        <fullName evidence="7 8">Hainantoxin-III 6</fullName>
        <shortName evidence="7 8">HnTx-III</shortName>
    </recommendedName>
    <alternativeName>
        <fullName>Hainantoxin-3.6</fullName>
    </alternativeName>
    <alternativeName>
        <fullName>Mu-theraphotoxin-Hhn2a</fullName>
        <shortName>Mu-TRTX-Hhn2a</shortName>
    </alternativeName>
    <alternativeName>
        <fullName>Peptide F7-18.76</fullName>
    </alternativeName>
</protein>
<organism>
    <name type="scientific">Cyriopagopus hainanus</name>
    <name type="common">Chinese bird spider</name>
    <name type="synonym">Haplopelma hainanum</name>
    <dbReference type="NCBI Taxonomy" id="209901"/>
    <lineage>
        <taxon>Eukaryota</taxon>
        <taxon>Metazoa</taxon>
        <taxon>Ecdysozoa</taxon>
        <taxon>Arthropoda</taxon>
        <taxon>Chelicerata</taxon>
        <taxon>Arachnida</taxon>
        <taxon>Araneae</taxon>
        <taxon>Mygalomorphae</taxon>
        <taxon>Theraphosidae</taxon>
        <taxon>Haplopelma</taxon>
    </lineage>
</organism>
<name>H3A06_CYRHA</name>
<reference key="1">
    <citation type="journal article" date="2010" name="J. Proteome Res.">
        <title>Molecular diversification of peptide toxins from the tarantula Haplopelma hainanum (Ornithoctonus hainana) venom based on transcriptomic, peptidomic, and genomic analyses.</title>
        <authorList>
            <person name="Tang X."/>
            <person name="Zhang Y."/>
            <person name="Hu W."/>
            <person name="Xu D."/>
            <person name="Tao H."/>
            <person name="Yang X."/>
            <person name="Li Y."/>
            <person name="Jiang L."/>
            <person name="Liang S."/>
        </authorList>
    </citation>
    <scope>NUCLEOTIDE SEQUENCE [LARGE SCALE MRNA]</scope>
    <scope>PROTEIN SEQUENCE OF 49-81</scope>
    <scope>IDENTIFICATION BY MASS SPECTROMETRY</scope>
    <source>
        <tissue>Venom</tissue>
        <tissue>Venom gland</tissue>
    </source>
</reference>
<reference key="2">
    <citation type="journal article" date="2003" name="Eur. J. Pharmacol.">
        <title>Inhibition of neuronal tetrodotoxin-sensitive Na+ channels by two spider toxins: hainantoxin-III and hainantoxin-IV.</title>
        <authorList>
            <person name="Xiao Y."/>
            <person name="Liang S."/>
        </authorList>
    </citation>
    <scope>PROTEIN SEQUENCE OF 49-81</scope>
    <scope>FUNCTION</scope>
    <scope>SUBCELLULAR LOCATION</scope>
    <scope>AMIDATION AT LEU-81</scope>
    <source>
        <tissue>Venom</tissue>
    </source>
</reference>
<reference key="3">
    <citation type="submission" date="2002-10" db="UniProtKB">
        <title>Function and solution structure of hainantoxin-III, a potent neuronal TTX-sensitive sodium channel antagonist from Chinese bird spider Selenocosmia hainana.</title>
        <authorList>
            <person name="Zhu Q."/>
            <person name="Liu Z.-H."/>
            <person name="Liang S.-P."/>
        </authorList>
    </citation>
    <scope>SUBUNIT</scope>
    <scope>MASS SPECTROMETRY</scope>
</reference>
<reference key="4">
    <citation type="journal article" date="2013" name="J. Biol. Chem.">
        <title>Structure and function of hainantoxin-III, a selective antagonist of neuronal tetrodotoxin-sensitive voltage-gated sodium channels isolated from the Chinese bird spider Ornithoctonus hainana.</title>
        <authorList>
            <person name="Liu Z."/>
            <person name="Cai T."/>
            <person name="Zhu Q."/>
            <person name="Deng M."/>
            <person name="Li J."/>
            <person name="Zhou X."/>
            <person name="Zhang F."/>
            <person name="Li D."/>
            <person name="Li J."/>
            <person name="Liu Y."/>
            <person name="Hu W."/>
            <person name="Liang S."/>
        </authorList>
    </citation>
    <scope>FUNCTION</scope>
    <scope>SUBCELLULAR LOCATION</scope>
    <scope>STRUCTURE BY NMR OF 49-81</scope>
    <scope>DISULFIDE BONDS</scope>
    <source>
        <tissue>Venom</tissue>
    </source>
</reference>
<reference key="5">
    <citation type="submission" date="2007-07" db="PDB data bank">
        <title>Three dimensional solution structure of hainantoxin-III by 2D 1H-NMR.</title>
        <authorList>
            <person name="Zhu Q."/>
            <person name="Liu Z."/>
            <person name="Liang S."/>
        </authorList>
    </citation>
    <scope>STRUCTURE BY NMR OF 49-81</scope>
    <scope>DISULFIDE BONDS</scope>
</reference>
<sequence length="83" mass="9135">MKASMFLALAGLVLLFVVGYASESEEKESPRELLSKIFAVDDFKGEERGCKGFGDSCTPGKNECCPNYACSSKHKWCKVYLGK</sequence>
<proteinExistence type="evidence at protein level"/>